<organism>
    <name type="scientific">Mus musculus</name>
    <name type="common">Mouse</name>
    <dbReference type="NCBI Taxonomy" id="10090"/>
    <lineage>
        <taxon>Eukaryota</taxon>
        <taxon>Metazoa</taxon>
        <taxon>Chordata</taxon>
        <taxon>Craniata</taxon>
        <taxon>Vertebrata</taxon>
        <taxon>Euteleostomi</taxon>
        <taxon>Mammalia</taxon>
        <taxon>Eutheria</taxon>
        <taxon>Euarchontoglires</taxon>
        <taxon>Glires</taxon>
        <taxon>Rodentia</taxon>
        <taxon>Myomorpha</taxon>
        <taxon>Muroidea</taxon>
        <taxon>Muridae</taxon>
        <taxon>Murinae</taxon>
        <taxon>Mus</taxon>
        <taxon>Mus</taxon>
    </lineage>
</organism>
<name>MMP20_MOUSE</name>
<evidence type="ECO:0000250" key="1"/>
<evidence type="ECO:0000250" key="2">
    <source>
        <dbReference type="UniProtKB" id="O60882"/>
    </source>
</evidence>
<evidence type="ECO:0000255" key="3"/>
<evidence type="ECO:0000255" key="4">
    <source>
        <dbReference type="PROSITE-ProRule" id="PRU10095"/>
    </source>
</evidence>
<evidence type="ECO:0000269" key="5">
    <source>
    </source>
</evidence>
<evidence type="ECO:0000269" key="6">
    <source>
    </source>
</evidence>
<evidence type="ECO:0000305" key="7"/>
<dbReference type="EC" id="3.4.24.-"/>
<dbReference type="EMBL" id="AF156956">
    <property type="protein sequence ID" value="AAF28472.1"/>
    <property type="molecule type" value="Genomic_DNA"/>
</dbReference>
<dbReference type="EMBL" id="AF156947">
    <property type="protein sequence ID" value="AAF28472.1"/>
    <property type="status" value="JOINED"/>
    <property type="molecule type" value="Genomic_DNA"/>
</dbReference>
<dbReference type="EMBL" id="AF156948">
    <property type="protein sequence ID" value="AAF28472.1"/>
    <property type="status" value="JOINED"/>
    <property type="molecule type" value="Genomic_DNA"/>
</dbReference>
<dbReference type="EMBL" id="AF156949">
    <property type="protein sequence ID" value="AAF28472.1"/>
    <property type="status" value="JOINED"/>
    <property type="molecule type" value="Genomic_DNA"/>
</dbReference>
<dbReference type="EMBL" id="AF156950">
    <property type="protein sequence ID" value="AAF28472.1"/>
    <property type="status" value="JOINED"/>
    <property type="molecule type" value="Genomic_DNA"/>
</dbReference>
<dbReference type="EMBL" id="AF156951">
    <property type="protein sequence ID" value="AAF28472.1"/>
    <property type="status" value="JOINED"/>
    <property type="molecule type" value="Genomic_DNA"/>
</dbReference>
<dbReference type="EMBL" id="AF156952">
    <property type="protein sequence ID" value="AAF28472.1"/>
    <property type="status" value="JOINED"/>
    <property type="molecule type" value="Genomic_DNA"/>
</dbReference>
<dbReference type="EMBL" id="AF156953">
    <property type="protein sequence ID" value="AAF28472.1"/>
    <property type="status" value="JOINED"/>
    <property type="molecule type" value="Genomic_DNA"/>
</dbReference>
<dbReference type="EMBL" id="AF156954">
    <property type="protein sequence ID" value="AAF28472.1"/>
    <property type="status" value="JOINED"/>
    <property type="molecule type" value="Genomic_DNA"/>
</dbReference>
<dbReference type="EMBL" id="AF156955">
    <property type="protein sequence ID" value="AAF28472.1"/>
    <property type="status" value="JOINED"/>
    <property type="molecule type" value="Genomic_DNA"/>
</dbReference>
<dbReference type="EMBL" id="AF155933">
    <property type="protein sequence ID" value="AAF28470.1"/>
    <property type="molecule type" value="mRNA"/>
</dbReference>
<dbReference type="EMBL" id="BC152335">
    <property type="protein sequence ID" value="AAI52336.1"/>
    <property type="molecule type" value="mRNA"/>
</dbReference>
<dbReference type="EMBL" id="BC152336">
    <property type="protein sequence ID" value="AAI52337.1"/>
    <property type="molecule type" value="mRNA"/>
</dbReference>
<dbReference type="CCDS" id="CCDS22809.1"/>
<dbReference type="RefSeq" id="NP_038931.1">
    <property type="nucleotide sequence ID" value="NM_013903.2"/>
</dbReference>
<dbReference type="SMR" id="P57748"/>
<dbReference type="FunCoup" id="P57748">
    <property type="interactions" value="50"/>
</dbReference>
<dbReference type="STRING" id="10090.ENSMUSP00000034487"/>
<dbReference type="MEROPS" id="M10.019"/>
<dbReference type="GlyGen" id="P57748">
    <property type="glycosylation" value="1 site"/>
</dbReference>
<dbReference type="PhosphoSitePlus" id="P57748"/>
<dbReference type="PaxDb" id="10090-ENSMUSP00000034487"/>
<dbReference type="ProteomicsDB" id="295687"/>
<dbReference type="Antibodypedia" id="31760">
    <property type="antibodies" value="275 antibodies from 29 providers"/>
</dbReference>
<dbReference type="DNASU" id="30800"/>
<dbReference type="Ensembl" id="ENSMUST00000034487.4">
    <property type="protein sequence ID" value="ENSMUSP00000034487.3"/>
    <property type="gene ID" value="ENSMUSG00000018620.4"/>
</dbReference>
<dbReference type="GeneID" id="30800"/>
<dbReference type="KEGG" id="mmu:30800"/>
<dbReference type="UCSC" id="uc009ocu.1">
    <property type="organism name" value="mouse"/>
</dbReference>
<dbReference type="AGR" id="MGI:1353466"/>
<dbReference type="CTD" id="9313"/>
<dbReference type="MGI" id="MGI:1353466">
    <property type="gene designation" value="Mmp20"/>
</dbReference>
<dbReference type="VEuPathDB" id="HostDB:ENSMUSG00000018620"/>
<dbReference type="eggNOG" id="KOG1565">
    <property type="taxonomic scope" value="Eukaryota"/>
</dbReference>
<dbReference type="GeneTree" id="ENSGT00940000161277"/>
<dbReference type="HOGENOM" id="CLU_015489_6_0_1"/>
<dbReference type="InParanoid" id="P57748"/>
<dbReference type="OMA" id="YKNPYGF"/>
<dbReference type="OrthoDB" id="406838at2759"/>
<dbReference type="PhylomeDB" id="P57748"/>
<dbReference type="TreeFam" id="TF315428"/>
<dbReference type="BRENDA" id="3.4.24.B6">
    <property type="organism ID" value="3474"/>
</dbReference>
<dbReference type="Reactome" id="R-MMU-1442490">
    <property type="pathway name" value="Collagen degradation"/>
</dbReference>
<dbReference type="Reactome" id="R-MMU-1474228">
    <property type="pathway name" value="Degradation of the extracellular matrix"/>
</dbReference>
<dbReference type="Reactome" id="R-MMU-2022090">
    <property type="pathway name" value="Assembly of collagen fibrils and other multimeric structures"/>
</dbReference>
<dbReference type="BioGRID-ORCS" id="30800">
    <property type="hits" value="1 hit in 77 CRISPR screens"/>
</dbReference>
<dbReference type="ChiTaRS" id="Mmp25">
    <property type="organism name" value="mouse"/>
</dbReference>
<dbReference type="PRO" id="PR:P57748"/>
<dbReference type="Proteomes" id="UP000000589">
    <property type="component" value="Chromosome 9"/>
</dbReference>
<dbReference type="RNAct" id="P57748">
    <property type="molecule type" value="protein"/>
</dbReference>
<dbReference type="Bgee" id="ENSMUSG00000018620">
    <property type="expression patterns" value="Expressed in molar tooth and 7 other cell types or tissues"/>
</dbReference>
<dbReference type="GO" id="GO:0031012">
    <property type="term" value="C:extracellular matrix"/>
    <property type="evidence" value="ECO:0007669"/>
    <property type="project" value="InterPro"/>
</dbReference>
<dbReference type="GO" id="GO:0005576">
    <property type="term" value="C:extracellular region"/>
    <property type="evidence" value="ECO:0000304"/>
    <property type="project" value="Reactome"/>
</dbReference>
<dbReference type="GO" id="GO:0004222">
    <property type="term" value="F:metalloendopeptidase activity"/>
    <property type="evidence" value="ECO:0007669"/>
    <property type="project" value="Ensembl"/>
</dbReference>
<dbReference type="GO" id="GO:0008270">
    <property type="term" value="F:zinc ion binding"/>
    <property type="evidence" value="ECO:0007669"/>
    <property type="project" value="InterPro"/>
</dbReference>
<dbReference type="GO" id="GO:0097186">
    <property type="term" value="P:amelogenesis"/>
    <property type="evidence" value="ECO:0000315"/>
    <property type="project" value="MGI"/>
</dbReference>
<dbReference type="GO" id="GO:0022617">
    <property type="term" value="P:extracellular matrix disassembly"/>
    <property type="evidence" value="ECO:0000315"/>
    <property type="project" value="MGI"/>
</dbReference>
<dbReference type="GO" id="GO:0030163">
    <property type="term" value="P:protein catabolic process"/>
    <property type="evidence" value="ECO:0000315"/>
    <property type="project" value="MGI"/>
</dbReference>
<dbReference type="GO" id="GO:0006508">
    <property type="term" value="P:proteolysis"/>
    <property type="evidence" value="ECO:0007669"/>
    <property type="project" value="UniProtKB-KW"/>
</dbReference>
<dbReference type="CDD" id="cd00094">
    <property type="entry name" value="HX"/>
    <property type="match status" value="1"/>
</dbReference>
<dbReference type="CDD" id="cd04278">
    <property type="entry name" value="ZnMc_MMP"/>
    <property type="match status" value="1"/>
</dbReference>
<dbReference type="FunFam" id="3.40.390.10:FF:000007">
    <property type="entry name" value="Collagenase 3"/>
    <property type="match status" value="1"/>
</dbReference>
<dbReference type="FunFam" id="2.110.10.10:FF:000002">
    <property type="entry name" value="Matrix metallopeptidase 3"/>
    <property type="match status" value="1"/>
</dbReference>
<dbReference type="Gene3D" id="3.40.390.10">
    <property type="entry name" value="Collagenase (Catalytic Domain)"/>
    <property type="match status" value="1"/>
</dbReference>
<dbReference type="Gene3D" id="2.110.10.10">
    <property type="entry name" value="Hemopexin-like domain"/>
    <property type="match status" value="1"/>
</dbReference>
<dbReference type="InterPro" id="IPR000585">
    <property type="entry name" value="Hemopexin-like_dom"/>
</dbReference>
<dbReference type="InterPro" id="IPR036375">
    <property type="entry name" value="Hemopexin-like_dom_sf"/>
</dbReference>
<dbReference type="InterPro" id="IPR018487">
    <property type="entry name" value="Hemopexin-like_repeat"/>
</dbReference>
<dbReference type="InterPro" id="IPR033739">
    <property type="entry name" value="M10A_MMP"/>
</dbReference>
<dbReference type="InterPro" id="IPR024079">
    <property type="entry name" value="MetalloPept_cat_dom_sf"/>
</dbReference>
<dbReference type="InterPro" id="IPR001818">
    <property type="entry name" value="Pept_M10_metallopeptidase"/>
</dbReference>
<dbReference type="InterPro" id="IPR021190">
    <property type="entry name" value="Pept_M10A"/>
</dbReference>
<dbReference type="InterPro" id="IPR021158">
    <property type="entry name" value="Pept_M10A_Zn_BS"/>
</dbReference>
<dbReference type="InterPro" id="IPR006026">
    <property type="entry name" value="Peptidase_Metallo"/>
</dbReference>
<dbReference type="InterPro" id="IPR002477">
    <property type="entry name" value="Peptidoglycan-bd-like"/>
</dbReference>
<dbReference type="InterPro" id="IPR036365">
    <property type="entry name" value="PGBD-like_sf"/>
</dbReference>
<dbReference type="PANTHER" id="PTHR10201">
    <property type="entry name" value="MATRIX METALLOPROTEINASE"/>
    <property type="match status" value="1"/>
</dbReference>
<dbReference type="PANTHER" id="PTHR10201:SF125">
    <property type="entry name" value="MATRIX METALLOPROTEINASE-20"/>
    <property type="match status" value="1"/>
</dbReference>
<dbReference type="Pfam" id="PF00045">
    <property type="entry name" value="Hemopexin"/>
    <property type="match status" value="4"/>
</dbReference>
<dbReference type="Pfam" id="PF00413">
    <property type="entry name" value="Peptidase_M10"/>
    <property type="match status" value="1"/>
</dbReference>
<dbReference type="Pfam" id="PF01471">
    <property type="entry name" value="PG_binding_1"/>
    <property type="match status" value="1"/>
</dbReference>
<dbReference type="PIRSF" id="PIRSF001191">
    <property type="entry name" value="Peptidase_M10A_matrix"/>
    <property type="match status" value="1"/>
</dbReference>
<dbReference type="PRINTS" id="PR00138">
    <property type="entry name" value="MATRIXIN"/>
</dbReference>
<dbReference type="SMART" id="SM00120">
    <property type="entry name" value="HX"/>
    <property type="match status" value="4"/>
</dbReference>
<dbReference type="SMART" id="SM00235">
    <property type="entry name" value="ZnMc"/>
    <property type="match status" value="1"/>
</dbReference>
<dbReference type="SUPFAM" id="SSF50923">
    <property type="entry name" value="Hemopexin-like domain"/>
    <property type="match status" value="1"/>
</dbReference>
<dbReference type="SUPFAM" id="SSF55486">
    <property type="entry name" value="Metalloproteases ('zincins'), catalytic domain"/>
    <property type="match status" value="1"/>
</dbReference>
<dbReference type="SUPFAM" id="SSF47090">
    <property type="entry name" value="PGBD-like"/>
    <property type="match status" value="1"/>
</dbReference>
<dbReference type="PROSITE" id="PS00546">
    <property type="entry name" value="CYSTEINE_SWITCH"/>
    <property type="match status" value="1"/>
</dbReference>
<dbReference type="PROSITE" id="PS51642">
    <property type="entry name" value="HEMOPEXIN_2"/>
    <property type="match status" value="4"/>
</dbReference>
<dbReference type="PROSITE" id="PS00142">
    <property type="entry name" value="ZINC_PROTEASE"/>
    <property type="match status" value="1"/>
</dbReference>
<proteinExistence type="evidence at transcript level"/>
<keyword id="KW-0068">Autocatalytic cleavage</keyword>
<keyword id="KW-0106">Calcium</keyword>
<keyword id="KW-1015">Disulfide bond</keyword>
<keyword id="KW-0272">Extracellular matrix</keyword>
<keyword id="KW-0378">Hydrolase</keyword>
<keyword id="KW-0479">Metal-binding</keyword>
<keyword id="KW-0482">Metalloprotease</keyword>
<keyword id="KW-0645">Protease</keyword>
<keyword id="KW-1185">Reference proteome</keyword>
<keyword id="KW-0677">Repeat</keyword>
<keyword id="KW-0964">Secreted</keyword>
<keyword id="KW-0732">Signal</keyword>
<keyword id="KW-0862">Zinc</keyword>
<keyword id="KW-0865">Zymogen</keyword>
<reference key="1">
    <citation type="journal article" date="1999" name="Genomics">
        <title>Isolation, characterization, and chromosomal location of the mouse enamelysin gene.</title>
        <authorList>
            <person name="Caterina J."/>
            <person name="Shi J."/>
            <person name="Krakora S."/>
            <person name="Bartlett J.D."/>
            <person name="Engler J.A."/>
            <person name="Kozak C.A."/>
            <person name="Birkedal-Hansen H."/>
        </authorList>
    </citation>
    <scope>NUCLEOTIDE SEQUENCE [GENOMIC DNA / MRNA]</scope>
    <scope>TISSUE SPECIFICITY</scope>
    <source>
        <strain>129/SvJ</strain>
    </source>
</reference>
<reference key="2">
    <citation type="journal article" date="2004" name="Genome Res.">
        <title>The status, quality, and expansion of the NIH full-length cDNA project: the Mammalian Gene Collection (MGC).</title>
        <authorList>
            <consortium name="The MGC Project Team"/>
        </authorList>
    </citation>
    <scope>NUCLEOTIDE SEQUENCE [LARGE SCALE MRNA]</scope>
</reference>
<reference key="3">
    <citation type="journal article" date="2011" name="J. Cell Sci.">
        <title>PERP regulates enamel formation via effects on cell-cell adhesion and gene expression.</title>
        <authorList>
            <person name="Jheon A.H."/>
            <person name="Mostowfi P."/>
            <person name="Snead M.L."/>
            <person name="Ihrie R.A."/>
            <person name="Sone E."/>
            <person name="Pramparo T."/>
            <person name="Attardi L.D."/>
            <person name="Klein O.D."/>
        </authorList>
    </citation>
    <scope>DEVELOPMENTAL STAGE</scope>
</reference>
<accession>P57748</accession>
<accession>A7MCV5</accession>
<comment type="function">
    <text evidence="2">Degrades amelogenin, the major protein component of the enamel matrix and two of the macromolecules characterizing the cartilage extracellular matrix: aggrecan and the cartilage oligomeric matrix protein (COMP). May play a central role in tooth enamel formation. Cleaves aggrecan at the '360-Asn-|-Phe-361' site.</text>
</comment>
<comment type="cofactor">
    <cofactor evidence="1">
        <name>Zn(2+)</name>
        <dbReference type="ChEBI" id="CHEBI:29105"/>
    </cofactor>
    <text evidence="1">Binds 2 Zn(2+) ions per subunit.</text>
</comment>
<comment type="cofactor">
    <cofactor evidence="1">
        <name>Ca(2+)</name>
        <dbReference type="ChEBI" id="CHEBI:29108"/>
    </cofactor>
    <text evidence="1">Binds 2 Calcium ions per subunit.</text>
</comment>
<comment type="subcellular location">
    <subcellularLocation>
        <location evidence="1">Secreted</location>
        <location evidence="1">Extracellular space</location>
        <location evidence="1">Extracellular matrix</location>
    </subcellularLocation>
</comment>
<comment type="tissue specificity">
    <text evidence="5">Expressed in the enamel organ.</text>
</comment>
<comment type="developmental stage">
    <text evidence="6">Expressed in first lower molars at birth.</text>
</comment>
<comment type="domain">
    <text>The conserved cysteine present in the cysteine-switch motif binds the catalytic zinc ion, thus inhibiting the enzyme. The dissociation of the cysteine from the zinc ion upon the activation-peptide release activates the enzyme.</text>
</comment>
<comment type="PTM">
    <text evidence="1">Autoactivates at least at the 106-Asn-|-Tyr-107 site.</text>
</comment>
<comment type="similarity">
    <text evidence="7">Belongs to the peptidase M10A family.</text>
</comment>
<feature type="signal peptide" evidence="3">
    <location>
        <begin position="1"/>
        <end position="21"/>
    </location>
</feature>
<feature type="propeptide" id="PRO_0000028835" evidence="1">
    <location>
        <begin position="22"/>
        <end position="106"/>
    </location>
</feature>
<feature type="chain" id="PRO_0000028836" description="Matrix metalloproteinase-20">
    <location>
        <begin position="107"/>
        <end position="482"/>
    </location>
</feature>
<feature type="repeat" description="Hemopexin 1">
    <location>
        <begin position="292"/>
        <end position="342"/>
    </location>
</feature>
<feature type="repeat" description="Hemopexin 2">
    <location>
        <begin position="343"/>
        <end position="388"/>
    </location>
</feature>
<feature type="repeat" description="Hemopexin 3">
    <location>
        <begin position="390"/>
        <end position="438"/>
    </location>
</feature>
<feature type="repeat" description="Hemopexin 4">
    <location>
        <begin position="439"/>
        <end position="482"/>
    </location>
</feature>
<feature type="short sequence motif" description="Cysteine switch" evidence="1">
    <location>
        <begin position="97"/>
        <end position="104"/>
    </location>
</feature>
<feature type="active site" evidence="4">
    <location>
        <position position="226"/>
    </location>
</feature>
<feature type="binding site" description="in inhibited form" evidence="1">
    <location>
        <position position="99"/>
    </location>
    <ligand>
        <name>Zn(2+)</name>
        <dbReference type="ChEBI" id="CHEBI:29105"/>
        <label>1</label>
        <note>catalytic</note>
    </ligand>
</feature>
<feature type="binding site" evidence="1">
    <location>
        <position position="163"/>
    </location>
    <ligand>
        <name>Ca(2+)</name>
        <dbReference type="ChEBI" id="CHEBI:29108"/>
        <label>1</label>
    </ligand>
</feature>
<feature type="binding site" evidence="1">
    <location>
        <position position="164"/>
    </location>
    <ligand>
        <name>Ca(2+)</name>
        <dbReference type="ChEBI" id="CHEBI:29108"/>
        <label>1</label>
    </ligand>
</feature>
<feature type="binding site" evidence="1">
    <location>
        <position position="165"/>
    </location>
    <ligand>
        <name>Ca(2+)</name>
        <dbReference type="ChEBI" id="CHEBI:29108"/>
        <label>1</label>
    </ligand>
</feature>
<feature type="binding site" evidence="1">
    <location>
        <position position="175"/>
    </location>
    <ligand>
        <name>Zn(2+)</name>
        <dbReference type="ChEBI" id="CHEBI:29105"/>
        <label>2</label>
    </ligand>
</feature>
<feature type="binding site" evidence="1">
    <location>
        <position position="177"/>
    </location>
    <ligand>
        <name>Zn(2+)</name>
        <dbReference type="ChEBI" id="CHEBI:29105"/>
        <label>2</label>
    </ligand>
</feature>
<feature type="binding site" evidence="1">
    <location>
        <position position="182"/>
    </location>
    <ligand>
        <name>Ca(2+)</name>
        <dbReference type="ChEBI" id="CHEBI:29108"/>
        <label>2</label>
    </ligand>
</feature>
<feature type="binding site" evidence="1">
    <location>
        <position position="183"/>
    </location>
    <ligand>
        <name>Ca(2+)</name>
        <dbReference type="ChEBI" id="CHEBI:29108"/>
        <label>2</label>
    </ligand>
</feature>
<feature type="binding site" evidence="1">
    <location>
        <position position="185"/>
    </location>
    <ligand>
        <name>Ca(2+)</name>
        <dbReference type="ChEBI" id="CHEBI:29108"/>
        <label>2</label>
    </ligand>
</feature>
<feature type="binding site" evidence="1">
    <location>
        <position position="187"/>
    </location>
    <ligand>
        <name>Ca(2+)</name>
        <dbReference type="ChEBI" id="CHEBI:29108"/>
        <label>2</label>
    </ligand>
</feature>
<feature type="binding site" evidence="1">
    <location>
        <position position="190"/>
    </location>
    <ligand>
        <name>Zn(2+)</name>
        <dbReference type="ChEBI" id="CHEBI:29105"/>
        <label>2</label>
    </ligand>
</feature>
<feature type="binding site" evidence="1">
    <location>
        <position position="196"/>
    </location>
    <ligand>
        <name>Ca(2+)</name>
        <dbReference type="ChEBI" id="CHEBI:29108"/>
        <label>1</label>
    </ligand>
</feature>
<feature type="binding site" evidence="1">
    <location>
        <position position="197"/>
    </location>
    <ligand>
        <name>Ca(2+)</name>
        <dbReference type="ChEBI" id="CHEBI:29108"/>
        <label>1</label>
    </ligand>
</feature>
<feature type="binding site" evidence="1">
    <location>
        <position position="199"/>
    </location>
    <ligand>
        <name>Ca(2+)</name>
        <dbReference type="ChEBI" id="CHEBI:29108"/>
        <label>1</label>
    </ligand>
</feature>
<feature type="binding site" evidence="1">
    <location>
        <position position="201"/>
    </location>
    <ligand>
        <name>Ca(2+)</name>
        <dbReference type="ChEBI" id="CHEBI:29108"/>
        <label>1</label>
    </ligand>
</feature>
<feature type="binding site" evidence="1">
    <location>
        <position position="203"/>
    </location>
    <ligand>
        <name>Zn(2+)</name>
        <dbReference type="ChEBI" id="CHEBI:29105"/>
        <label>2</label>
    </ligand>
</feature>
<feature type="binding site" evidence="1">
    <location>
        <position position="205"/>
    </location>
    <ligand>
        <name>Ca(2+)</name>
        <dbReference type="ChEBI" id="CHEBI:29108"/>
        <label>2</label>
    </ligand>
</feature>
<feature type="binding site" evidence="1">
    <location>
        <position position="208"/>
    </location>
    <ligand>
        <name>Ca(2+)</name>
        <dbReference type="ChEBI" id="CHEBI:29108"/>
        <label>2</label>
    </ligand>
</feature>
<feature type="binding site" evidence="1">
    <location>
        <position position="225"/>
    </location>
    <ligand>
        <name>Zn(2+)</name>
        <dbReference type="ChEBI" id="CHEBI:29105"/>
        <label>1</label>
        <note>catalytic</note>
    </ligand>
</feature>
<feature type="binding site" evidence="1">
    <location>
        <position position="229"/>
    </location>
    <ligand>
        <name>Zn(2+)</name>
        <dbReference type="ChEBI" id="CHEBI:29105"/>
        <label>1</label>
        <note>catalytic</note>
    </ligand>
</feature>
<feature type="binding site" evidence="1">
    <location>
        <position position="235"/>
    </location>
    <ligand>
        <name>Zn(2+)</name>
        <dbReference type="ChEBI" id="CHEBI:29105"/>
        <label>1</label>
        <note>catalytic</note>
    </ligand>
</feature>
<feature type="disulfide bond" evidence="1">
    <location>
        <begin position="295"/>
        <end position="482"/>
    </location>
</feature>
<sequence length="482" mass="54373">MKVLPASGLAVLVTALKFATADPNLLAATPRTFRSNYHLAQAYLDKYYTKKGGPQAGEMVARESNPMIRRIKELQIFFGLKVTGKLDQNTMNVIKKPRCGVPDVANYRLFPGEPKWKKNILTYRISKYTPSMSPTEVDKAIQMALHAWSTAVPLNFVRINSGEADIMISFETGDHGDSYPFDGPRGTLAHAFAPGEGLGGDTHFDNAEKWTMGTNGFNLFTVAAHEFGHALGLGHSTDPSALMYPTYKYQNPYRFHLPKDDVKGIQALYGPRKIFPGKPTMPHIPPHKPSIPDLCDSSSSFDAVTMLGKELLFFKDRIFWRRQVHLPTGIRPSTITSSFPQLMSNVDAAYEVAERGIAFFFKGPHYWVTRGFHMQGPPRTIYDFGFPRHVQRIDAAVYLKEPQKTLFFVGEEYYSYDERKKKMEKDYPKNTEEEFSGVSGHIDAAVELNGYIYFFSGRKTFKYDTEKEDVVSVVKSSSWIGC</sequence>
<gene>
    <name type="primary">Mmp20</name>
</gene>
<protein>
    <recommendedName>
        <fullName>Matrix metalloproteinase-20</fullName>
        <shortName>MMP-20</shortName>
        <ecNumber>3.4.24.-</ecNumber>
    </recommendedName>
    <alternativeName>
        <fullName>Enamel metalloproteinase</fullName>
    </alternativeName>
    <alternativeName>
        <fullName>Enamelysin</fullName>
    </alternativeName>
</protein>